<protein>
    <recommendedName>
        <fullName evidence="1">Large ribosomal subunit protein bL35</fullName>
    </recommendedName>
    <alternativeName>
        <fullName evidence="2">50S ribosomal protein L35</fullName>
    </alternativeName>
</protein>
<comment type="similarity">
    <text evidence="1">Belongs to the bacterial ribosomal protein bL35 family.</text>
</comment>
<proteinExistence type="inferred from homology"/>
<dbReference type="EMBL" id="CP001016">
    <property type="protein sequence ID" value="ACB96604.1"/>
    <property type="molecule type" value="Genomic_DNA"/>
</dbReference>
<dbReference type="RefSeq" id="WP_012385953.1">
    <property type="nucleotide sequence ID" value="NC_010581.1"/>
</dbReference>
<dbReference type="SMR" id="B2IBH8"/>
<dbReference type="STRING" id="395963.Bind_3042"/>
<dbReference type="KEGG" id="bid:Bind_3042"/>
<dbReference type="eggNOG" id="COG0291">
    <property type="taxonomic scope" value="Bacteria"/>
</dbReference>
<dbReference type="HOGENOM" id="CLU_169643_2_1_5"/>
<dbReference type="OrthoDB" id="9804851at2"/>
<dbReference type="Proteomes" id="UP000001695">
    <property type="component" value="Chromosome"/>
</dbReference>
<dbReference type="GO" id="GO:0022625">
    <property type="term" value="C:cytosolic large ribosomal subunit"/>
    <property type="evidence" value="ECO:0007669"/>
    <property type="project" value="TreeGrafter"/>
</dbReference>
<dbReference type="GO" id="GO:0003735">
    <property type="term" value="F:structural constituent of ribosome"/>
    <property type="evidence" value="ECO:0007669"/>
    <property type="project" value="InterPro"/>
</dbReference>
<dbReference type="GO" id="GO:0006412">
    <property type="term" value="P:translation"/>
    <property type="evidence" value="ECO:0007669"/>
    <property type="project" value="UniProtKB-UniRule"/>
</dbReference>
<dbReference type="FunFam" id="4.10.410.60:FF:000001">
    <property type="entry name" value="50S ribosomal protein L35"/>
    <property type="match status" value="1"/>
</dbReference>
<dbReference type="Gene3D" id="4.10.410.60">
    <property type="match status" value="1"/>
</dbReference>
<dbReference type="HAMAP" id="MF_00514">
    <property type="entry name" value="Ribosomal_bL35"/>
    <property type="match status" value="1"/>
</dbReference>
<dbReference type="InterPro" id="IPR001706">
    <property type="entry name" value="Ribosomal_bL35"/>
</dbReference>
<dbReference type="InterPro" id="IPR021137">
    <property type="entry name" value="Ribosomal_bL35-like"/>
</dbReference>
<dbReference type="InterPro" id="IPR018265">
    <property type="entry name" value="Ribosomal_bL35_CS"/>
</dbReference>
<dbReference type="InterPro" id="IPR037229">
    <property type="entry name" value="Ribosomal_bL35_sf"/>
</dbReference>
<dbReference type="NCBIfam" id="TIGR00001">
    <property type="entry name" value="rpmI_bact"/>
    <property type="match status" value="1"/>
</dbReference>
<dbReference type="PANTHER" id="PTHR33343">
    <property type="entry name" value="54S RIBOSOMAL PROTEIN BL35M"/>
    <property type="match status" value="1"/>
</dbReference>
<dbReference type="PANTHER" id="PTHR33343:SF1">
    <property type="entry name" value="LARGE RIBOSOMAL SUBUNIT PROTEIN BL35M"/>
    <property type="match status" value="1"/>
</dbReference>
<dbReference type="Pfam" id="PF01632">
    <property type="entry name" value="Ribosomal_L35p"/>
    <property type="match status" value="1"/>
</dbReference>
<dbReference type="PRINTS" id="PR00064">
    <property type="entry name" value="RIBOSOMALL35"/>
</dbReference>
<dbReference type="SUPFAM" id="SSF143034">
    <property type="entry name" value="L35p-like"/>
    <property type="match status" value="1"/>
</dbReference>
<dbReference type="PROSITE" id="PS00936">
    <property type="entry name" value="RIBOSOMAL_L35"/>
    <property type="match status" value="1"/>
</dbReference>
<organism>
    <name type="scientific">Beijerinckia indica subsp. indica (strain ATCC 9039 / DSM 1715 / NCIMB 8712)</name>
    <dbReference type="NCBI Taxonomy" id="395963"/>
    <lineage>
        <taxon>Bacteria</taxon>
        <taxon>Pseudomonadati</taxon>
        <taxon>Pseudomonadota</taxon>
        <taxon>Alphaproteobacteria</taxon>
        <taxon>Hyphomicrobiales</taxon>
        <taxon>Beijerinckiaceae</taxon>
        <taxon>Beijerinckia</taxon>
    </lineage>
</organism>
<feature type="chain" id="PRO_1000127309" description="Large ribosomal subunit protein bL35">
    <location>
        <begin position="1"/>
        <end position="66"/>
    </location>
</feature>
<gene>
    <name evidence="1" type="primary">rpmI</name>
    <name type="ordered locus">Bind_3042</name>
</gene>
<keyword id="KW-1185">Reference proteome</keyword>
<keyword id="KW-0687">Ribonucleoprotein</keyword>
<keyword id="KW-0689">Ribosomal protein</keyword>
<sequence length="66" mass="7509">MPKLKTKSGAKKRFKITATGKVIYAQSGKRHGMIKRTNKQIRNLRGTNVMFKSDGDKIIRFFLPNG</sequence>
<evidence type="ECO:0000255" key="1">
    <source>
        <dbReference type="HAMAP-Rule" id="MF_00514"/>
    </source>
</evidence>
<evidence type="ECO:0000305" key="2"/>
<accession>B2IBH8</accession>
<name>RL35_BEII9</name>
<reference key="1">
    <citation type="journal article" date="2010" name="J. Bacteriol.">
        <title>Complete genome sequence of Beijerinckia indica subsp. indica.</title>
        <authorList>
            <person name="Tamas I."/>
            <person name="Dedysh S.N."/>
            <person name="Liesack W."/>
            <person name="Stott M.B."/>
            <person name="Alam M."/>
            <person name="Murrell J.C."/>
            <person name="Dunfield P.F."/>
        </authorList>
    </citation>
    <scope>NUCLEOTIDE SEQUENCE [LARGE SCALE GENOMIC DNA]</scope>
    <source>
        <strain>ATCC 9039 / DSM 1715 / NCIMB 8712</strain>
    </source>
</reference>